<accession>A1TJT9</accession>
<evidence type="ECO:0000255" key="1">
    <source>
        <dbReference type="HAMAP-Rule" id="MF_01315"/>
    </source>
</evidence>
<evidence type="ECO:0000256" key="2">
    <source>
        <dbReference type="SAM" id="MobiDB-lite"/>
    </source>
</evidence>
<evidence type="ECO:0000305" key="3"/>
<feature type="chain" id="PRO_0000306550" description="Small ribosomal subunit protein uS13">
    <location>
        <begin position="1"/>
        <end position="121"/>
    </location>
</feature>
<feature type="region of interest" description="Disordered" evidence="2">
    <location>
        <begin position="93"/>
        <end position="121"/>
    </location>
</feature>
<organism>
    <name type="scientific">Paracidovorax citrulli (strain AAC00-1)</name>
    <name type="common">Acidovorax citrulli</name>
    <dbReference type="NCBI Taxonomy" id="397945"/>
    <lineage>
        <taxon>Bacteria</taxon>
        <taxon>Pseudomonadati</taxon>
        <taxon>Pseudomonadota</taxon>
        <taxon>Betaproteobacteria</taxon>
        <taxon>Burkholderiales</taxon>
        <taxon>Comamonadaceae</taxon>
        <taxon>Paracidovorax</taxon>
    </lineage>
</organism>
<gene>
    <name evidence="1" type="primary">rpsM</name>
    <name type="ordered locus">Aave_0623</name>
</gene>
<name>RS13_PARC0</name>
<reference key="1">
    <citation type="submission" date="2006-12" db="EMBL/GenBank/DDBJ databases">
        <title>Complete sequence of Acidovorax avenae subsp. citrulli AAC00-1.</title>
        <authorList>
            <person name="Copeland A."/>
            <person name="Lucas S."/>
            <person name="Lapidus A."/>
            <person name="Barry K."/>
            <person name="Detter J.C."/>
            <person name="Glavina del Rio T."/>
            <person name="Dalin E."/>
            <person name="Tice H."/>
            <person name="Pitluck S."/>
            <person name="Kiss H."/>
            <person name="Brettin T."/>
            <person name="Bruce D."/>
            <person name="Han C."/>
            <person name="Tapia R."/>
            <person name="Gilna P."/>
            <person name="Schmutz J."/>
            <person name="Larimer F."/>
            <person name="Land M."/>
            <person name="Hauser L."/>
            <person name="Kyrpides N."/>
            <person name="Kim E."/>
            <person name="Stahl D."/>
            <person name="Richardson P."/>
        </authorList>
    </citation>
    <scope>NUCLEOTIDE SEQUENCE [LARGE SCALE GENOMIC DNA]</scope>
    <source>
        <strain>AAC00-1</strain>
    </source>
</reference>
<proteinExistence type="inferred from homology"/>
<comment type="function">
    <text evidence="1">Located at the top of the head of the 30S subunit, it contacts several helices of the 16S rRNA. In the 70S ribosome it contacts the 23S rRNA (bridge B1a) and protein L5 of the 50S subunit (bridge B1b), connecting the 2 subunits; these bridges are implicated in subunit movement. Contacts the tRNAs in the A and P-sites.</text>
</comment>
<comment type="subunit">
    <text evidence="1">Part of the 30S ribosomal subunit. Forms a loose heterodimer with protein S19. Forms two bridges to the 50S subunit in the 70S ribosome.</text>
</comment>
<comment type="similarity">
    <text evidence="1">Belongs to the universal ribosomal protein uS13 family.</text>
</comment>
<sequence length="121" mass="13672">MARIAGINIPPHQHAEIGLTAIFGIGRTRARKICEACGIAYSKKIKDLTDGDLEKIRDQIAQFTIEGDLRRETTMNIKRLMDIGCYRGFRHRRGLPMRGQRTRTNARTRKGPRKGAAALKK</sequence>
<dbReference type="EMBL" id="CP000512">
    <property type="protein sequence ID" value="ABM31227.1"/>
    <property type="molecule type" value="Genomic_DNA"/>
</dbReference>
<dbReference type="RefSeq" id="WP_011793798.1">
    <property type="nucleotide sequence ID" value="NC_008752.1"/>
</dbReference>
<dbReference type="SMR" id="A1TJT9"/>
<dbReference type="STRING" id="397945.Aave_0623"/>
<dbReference type="GeneID" id="79790337"/>
<dbReference type="KEGG" id="aav:Aave_0623"/>
<dbReference type="eggNOG" id="COG0099">
    <property type="taxonomic scope" value="Bacteria"/>
</dbReference>
<dbReference type="HOGENOM" id="CLU_103849_1_2_4"/>
<dbReference type="OrthoDB" id="9803610at2"/>
<dbReference type="Proteomes" id="UP000002596">
    <property type="component" value="Chromosome"/>
</dbReference>
<dbReference type="GO" id="GO:0005829">
    <property type="term" value="C:cytosol"/>
    <property type="evidence" value="ECO:0007669"/>
    <property type="project" value="TreeGrafter"/>
</dbReference>
<dbReference type="GO" id="GO:0015935">
    <property type="term" value="C:small ribosomal subunit"/>
    <property type="evidence" value="ECO:0007669"/>
    <property type="project" value="TreeGrafter"/>
</dbReference>
<dbReference type="GO" id="GO:0019843">
    <property type="term" value="F:rRNA binding"/>
    <property type="evidence" value="ECO:0007669"/>
    <property type="project" value="UniProtKB-UniRule"/>
</dbReference>
<dbReference type="GO" id="GO:0003735">
    <property type="term" value="F:structural constituent of ribosome"/>
    <property type="evidence" value="ECO:0007669"/>
    <property type="project" value="InterPro"/>
</dbReference>
<dbReference type="GO" id="GO:0000049">
    <property type="term" value="F:tRNA binding"/>
    <property type="evidence" value="ECO:0007669"/>
    <property type="project" value="UniProtKB-UniRule"/>
</dbReference>
<dbReference type="GO" id="GO:0006412">
    <property type="term" value="P:translation"/>
    <property type="evidence" value="ECO:0007669"/>
    <property type="project" value="UniProtKB-UniRule"/>
</dbReference>
<dbReference type="FunFam" id="1.10.8.50:FF:000001">
    <property type="entry name" value="30S ribosomal protein S13"/>
    <property type="match status" value="1"/>
</dbReference>
<dbReference type="FunFam" id="4.10.910.10:FF:000001">
    <property type="entry name" value="30S ribosomal protein S13"/>
    <property type="match status" value="1"/>
</dbReference>
<dbReference type="Gene3D" id="1.10.8.50">
    <property type="match status" value="1"/>
</dbReference>
<dbReference type="Gene3D" id="4.10.910.10">
    <property type="entry name" value="30s ribosomal protein s13, domain 2"/>
    <property type="match status" value="1"/>
</dbReference>
<dbReference type="HAMAP" id="MF_01315">
    <property type="entry name" value="Ribosomal_uS13"/>
    <property type="match status" value="1"/>
</dbReference>
<dbReference type="InterPro" id="IPR027437">
    <property type="entry name" value="Rbsml_uS13_C"/>
</dbReference>
<dbReference type="InterPro" id="IPR001892">
    <property type="entry name" value="Ribosomal_uS13"/>
</dbReference>
<dbReference type="InterPro" id="IPR010979">
    <property type="entry name" value="Ribosomal_uS13-like_H2TH"/>
</dbReference>
<dbReference type="InterPro" id="IPR019980">
    <property type="entry name" value="Ribosomal_uS13_bac-type"/>
</dbReference>
<dbReference type="InterPro" id="IPR018269">
    <property type="entry name" value="Ribosomal_uS13_CS"/>
</dbReference>
<dbReference type="NCBIfam" id="TIGR03631">
    <property type="entry name" value="uS13_bact"/>
    <property type="match status" value="1"/>
</dbReference>
<dbReference type="PANTHER" id="PTHR10871">
    <property type="entry name" value="30S RIBOSOMAL PROTEIN S13/40S RIBOSOMAL PROTEIN S18"/>
    <property type="match status" value="1"/>
</dbReference>
<dbReference type="PANTHER" id="PTHR10871:SF1">
    <property type="entry name" value="SMALL RIBOSOMAL SUBUNIT PROTEIN US13M"/>
    <property type="match status" value="1"/>
</dbReference>
<dbReference type="Pfam" id="PF00416">
    <property type="entry name" value="Ribosomal_S13"/>
    <property type="match status" value="1"/>
</dbReference>
<dbReference type="PIRSF" id="PIRSF002134">
    <property type="entry name" value="Ribosomal_S13"/>
    <property type="match status" value="1"/>
</dbReference>
<dbReference type="SUPFAM" id="SSF46946">
    <property type="entry name" value="S13-like H2TH domain"/>
    <property type="match status" value="1"/>
</dbReference>
<dbReference type="PROSITE" id="PS00646">
    <property type="entry name" value="RIBOSOMAL_S13_1"/>
    <property type="match status" value="1"/>
</dbReference>
<dbReference type="PROSITE" id="PS50159">
    <property type="entry name" value="RIBOSOMAL_S13_2"/>
    <property type="match status" value="1"/>
</dbReference>
<protein>
    <recommendedName>
        <fullName evidence="1">Small ribosomal subunit protein uS13</fullName>
    </recommendedName>
    <alternativeName>
        <fullName evidence="3">30S ribosomal protein S13</fullName>
    </alternativeName>
</protein>
<keyword id="KW-0687">Ribonucleoprotein</keyword>
<keyword id="KW-0689">Ribosomal protein</keyword>
<keyword id="KW-0694">RNA-binding</keyword>
<keyword id="KW-0699">rRNA-binding</keyword>
<keyword id="KW-0820">tRNA-binding</keyword>